<accession>A9KDE7</accession>
<evidence type="ECO:0000255" key="1">
    <source>
        <dbReference type="HAMAP-Rule" id="MF_00758"/>
    </source>
</evidence>
<evidence type="ECO:0000305" key="2"/>
<sequence length="181" mass="19901">MVKTNILSNHFLVAMPQLNDFTFTKAVIYVSQHDAKGALGIIINRPLALTLGKVLEHLNIEIAQPQIANHPVLMGGPIGQEHGFIVYEQESPQGAEILLSASKDMLDDIAKNKGPDDFLITLGYAGWEAGQLENEIARNDWLVVPFNRKILFETPLKSRWQKAAALIGVDINQLSGQIGHA</sequence>
<organism>
    <name type="scientific">Coxiella burnetii (strain Dugway 5J108-111)</name>
    <dbReference type="NCBI Taxonomy" id="434922"/>
    <lineage>
        <taxon>Bacteria</taxon>
        <taxon>Pseudomonadati</taxon>
        <taxon>Pseudomonadota</taxon>
        <taxon>Gammaproteobacteria</taxon>
        <taxon>Legionellales</taxon>
        <taxon>Coxiellaceae</taxon>
        <taxon>Coxiella</taxon>
    </lineage>
</organism>
<proteinExistence type="inferred from homology"/>
<feature type="chain" id="PRO_1000083508" description="UPF0301 protein CBUD_2193">
    <location>
        <begin position="1"/>
        <end position="181"/>
    </location>
</feature>
<reference key="1">
    <citation type="journal article" date="2009" name="Infect. Immun.">
        <title>Comparative genomics reveal extensive transposon-mediated genomic plasticity and diversity among potential effector proteins within the genus Coxiella.</title>
        <authorList>
            <person name="Beare P.A."/>
            <person name="Unsworth N."/>
            <person name="Andoh M."/>
            <person name="Voth D.E."/>
            <person name="Omsland A."/>
            <person name="Gilk S.D."/>
            <person name="Williams K.P."/>
            <person name="Sobral B.W."/>
            <person name="Kupko J.J. III"/>
            <person name="Porcella S.F."/>
            <person name="Samuel J.E."/>
            <person name="Heinzen R.A."/>
        </authorList>
    </citation>
    <scope>NUCLEOTIDE SEQUENCE [LARGE SCALE GENOMIC DNA]</scope>
    <source>
        <strain>Dugway 5J108-111</strain>
    </source>
</reference>
<protein>
    <recommendedName>
        <fullName evidence="1">UPF0301 protein CBUD_2193</fullName>
    </recommendedName>
</protein>
<name>Y2193_COXBN</name>
<comment type="similarity">
    <text evidence="1">Belongs to the UPF0301 (AlgH) family.</text>
</comment>
<comment type="sequence caution" evidence="2">
    <conflict type="erroneous initiation">
        <sequence resource="EMBL-CDS" id="ABS77677"/>
    </conflict>
</comment>
<dbReference type="EMBL" id="CP000733">
    <property type="protein sequence ID" value="ABS77677.2"/>
    <property type="status" value="ALT_INIT"/>
    <property type="molecule type" value="Genomic_DNA"/>
</dbReference>
<dbReference type="RefSeq" id="WP_005773009.1">
    <property type="nucleotide sequence ID" value="NC_009727.1"/>
</dbReference>
<dbReference type="SMR" id="A9KDE7"/>
<dbReference type="KEGG" id="cbd:CBUD_2193"/>
<dbReference type="HOGENOM" id="CLU_057596_1_0_6"/>
<dbReference type="Proteomes" id="UP000008555">
    <property type="component" value="Chromosome"/>
</dbReference>
<dbReference type="GO" id="GO:0005829">
    <property type="term" value="C:cytosol"/>
    <property type="evidence" value="ECO:0007669"/>
    <property type="project" value="TreeGrafter"/>
</dbReference>
<dbReference type="Gene3D" id="3.40.1740.10">
    <property type="entry name" value="VC0467-like"/>
    <property type="match status" value="1"/>
</dbReference>
<dbReference type="HAMAP" id="MF_00758">
    <property type="entry name" value="UPF0301"/>
    <property type="match status" value="1"/>
</dbReference>
<dbReference type="InterPro" id="IPR003774">
    <property type="entry name" value="AlgH-like"/>
</dbReference>
<dbReference type="NCBIfam" id="NF001266">
    <property type="entry name" value="PRK00228.1-1"/>
    <property type="match status" value="1"/>
</dbReference>
<dbReference type="PANTHER" id="PTHR30327">
    <property type="entry name" value="UNCHARACTERIZED PROTEIN YQGE"/>
    <property type="match status" value="1"/>
</dbReference>
<dbReference type="PANTHER" id="PTHR30327:SF1">
    <property type="entry name" value="UPF0301 PROTEIN YQGE"/>
    <property type="match status" value="1"/>
</dbReference>
<dbReference type="Pfam" id="PF02622">
    <property type="entry name" value="DUF179"/>
    <property type="match status" value="1"/>
</dbReference>
<dbReference type="SUPFAM" id="SSF143456">
    <property type="entry name" value="VC0467-like"/>
    <property type="match status" value="1"/>
</dbReference>
<gene>
    <name type="ordered locus">CBUD_2193</name>
</gene>